<sequence>MADTAHQCTIVGIAGASASGKSLIASTLYRELRAQVGDHNIGVIPEDCYYRDQSDLTMEERYKVNYDHPNSMDHALLYQHLCELKAGNAIELPQYDYVAHTRKSETIHFKPKKVIIIEGILLLTDKRLREEMDFSIFVDTPLDICLMRRIKRDVNERGRSLDSVIEQYNKTVRPMFFQFIEPSKQYADIIVPRGGKNRVAIDILKAKIGQFCE</sequence>
<accession>B4ESY8</accession>
<gene>
    <name evidence="1" type="primary">udk</name>
    <name type="ordered locus">PMI0649</name>
</gene>
<name>URK_PROMH</name>
<reference key="1">
    <citation type="journal article" date="2008" name="J. Bacteriol.">
        <title>Complete genome sequence of uropathogenic Proteus mirabilis, a master of both adherence and motility.</title>
        <authorList>
            <person name="Pearson M.M."/>
            <person name="Sebaihia M."/>
            <person name="Churcher C."/>
            <person name="Quail M.A."/>
            <person name="Seshasayee A.S."/>
            <person name="Luscombe N.M."/>
            <person name="Abdellah Z."/>
            <person name="Arrosmith C."/>
            <person name="Atkin B."/>
            <person name="Chillingworth T."/>
            <person name="Hauser H."/>
            <person name="Jagels K."/>
            <person name="Moule S."/>
            <person name="Mungall K."/>
            <person name="Norbertczak H."/>
            <person name="Rabbinowitsch E."/>
            <person name="Walker D."/>
            <person name="Whithead S."/>
            <person name="Thomson N.R."/>
            <person name="Rather P.N."/>
            <person name="Parkhill J."/>
            <person name="Mobley H.L.T."/>
        </authorList>
    </citation>
    <scope>NUCLEOTIDE SEQUENCE [LARGE SCALE GENOMIC DNA]</scope>
    <source>
        <strain>HI4320</strain>
    </source>
</reference>
<protein>
    <recommendedName>
        <fullName evidence="1">Uridine kinase</fullName>
        <ecNumber evidence="1">2.7.1.48</ecNumber>
    </recommendedName>
    <alternativeName>
        <fullName evidence="1">Cytidine monophosphokinase</fullName>
    </alternativeName>
    <alternativeName>
        <fullName evidence="1">Uridine monophosphokinase</fullName>
    </alternativeName>
</protein>
<keyword id="KW-0067">ATP-binding</keyword>
<keyword id="KW-0963">Cytoplasm</keyword>
<keyword id="KW-0418">Kinase</keyword>
<keyword id="KW-0547">Nucleotide-binding</keyword>
<keyword id="KW-1185">Reference proteome</keyword>
<keyword id="KW-0808">Transferase</keyword>
<comment type="catalytic activity">
    <reaction evidence="1">
        <text>uridine + ATP = UMP + ADP + H(+)</text>
        <dbReference type="Rhea" id="RHEA:16825"/>
        <dbReference type="ChEBI" id="CHEBI:15378"/>
        <dbReference type="ChEBI" id="CHEBI:16704"/>
        <dbReference type="ChEBI" id="CHEBI:30616"/>
        <dbReference type="ChEBI" id="CHEBI:57865"/>
        <dbReference type="ChEBI" id="CHEBI:456216"/>
        <dbReference type="EC" id="2.7.1.48"/>
    </reaction>
</comment>
<comment type="catalytic activity">
    <reaction evidence="1">
        <text>cytidine + ATP = CMP + ADP + H(+)</text>
        <dbReference type="Rhea" id="RHEA:24674"/>
        <dbReference type="ChEBI" id="CHEBI:15378"/>
        <dbReference type="ChEBI" id="CHEBI:17562"/>
        <dbReference type="ChEBI" id="CHEBI:30616"/>
        <dbReference type="ChEBI" id="CHEBI:60377"/>
        <dbReference type="ChEBI" id="CHEBI:456216"/>
        <dbReference type="EC" id="2.7.1.48"/>
    </reaction>
</comment>
<comment type="pathway">
    <text evidence="1">Pyrimidine metabolism; CTP biosynthesis via salvage pathway; CTP from cytidine: step 1/3.</text>
</comment>
<comment type="pathway">
    <text evidence="1">Pyrimidine metabolism; UMP biosynthesis via salvage pathway; UMP from uridine: step 1/1.</text>
</comment>
<comment type="subcellular location">
    <subcellularLocation>
        <location evidence="1">Cytoplasm</location>
    </subcellularLocation>
</comment>
<comment type="similarity">
    <text evidence="1">Belongs to the uridine kinase family.</text>
</comment>
<organism>
    <name type="scientific">Proteus mirabilis (strain HI4320)</name>
    <dbReference type="NCBI Taxonomy" id="529507"/>
    <lineage>
        <taxon>Bacteria</taxon>
        <taxon>Pseudomonadati</taxon>
        <taxon>Pseudomonadota</taxon>
        <taxon>Gammaproteobacteria</taxon>
        <taxon>Enterobacterales</taxon>
        <taxon>Morganellaceae</taxon>
        <taxon>Proteus</taxon>
    </lineage>
</organism>
<feature type="chain" id="PRO_1000129080" description="Uridine kinase">
    <location>
        <begin position="1"/>
        <end position="213"/>
    </location>
</feature>
<feature type="binding site" evidence="1">
    <location>
        <begin position="15"/>
        <end position="22"/>
    </location>
    <ligand>
        <name>ATP</name>
        <dbReference type="ChEBI" id="CHEBI:30616"/>
    </ligand>
</feature>
<evidence type="ECO:0000255" key="1">
    <source>
        <dbReference type="HAMAP-Rule" id="MF_00551"/>
    </source>
</evidence>
<proteinExistence type="inferred from homology"/>
<dbReference type="EC" id="2.7.1.48" evidence="1"/>
<dbReference type="EMBL" id="AM942759">
    <property type="protein sequence ID" value="CAR41528.1"/>
    <property type="molecule type" value="Genomic_DNA"/>
</dbReference>
<dbReference type="RefSeq" id="WP_004247591.1">
    <property type="nucleotide sequence ID" value="NC_010554.1"/>
</dbReference>
<dbReference type="SMR" id="B4ESY8"/>
<dbReference type="EnsemblBacteria" id="CAR41528">
    <property type="protein sequence ID" value="CAR41528"/>
    <property type="gene ID" value="PMI0649"/>
</dbReference>
<dbReference type="GeneID" id="6803426"/>
<dbReference type="KEGG" id="pmr:PMI0649"/>
<dbReference type="eggNOG" id="COG0572">
    <property type="taxonomic scope" value="Bacteria"/>
</dbReference>
<dbReference type="HOGENOM" id="CLU_021278_1_2_6"/>
<dbReference type="UniPathway" id="UPA00574">
    <property type="reaction ID" value="UER00637"/>
</dbReference>
<dbReference type="UniPathway" id="UPA00579">
    <property type="reaction ID" value="UER00640"/>
</dbReference>
<dbReference type="Proteomes" id="UP000008319">
    <property type="component" value="Chromosome"/>
</dbReference>
<dbReference type="GO" id="GO:0005737">
    <property type="term" value="C:cytoplasm"/>
    <property type="evidence" value="ECO:0007669"/>
    <property type="project" value="UniProtKB-SubCell"/>
</dbReference>
<dbReference type="GO" id="GO:0005524">
    <property type="term" value="F:ATP binding"/>
    <property type="evidence" value="ECO:0007669"/>
    <property type="project" value="UniProtKB-UniRule"/>
</dbReference>
<dbReference type="GO" id="GO:0043771">
    <property type="term" value="F:cytidine kinase activity"/>
    <property type="evidence" value="ECO:0007669"/>
    <property type="project" value="RHEA"/>
</dbReference>
<dbReference type="GO" id="GO:0004849">
    <property type="term" value="F:uridine kinase activity"/>
    <property type="evidence" value="ECO:0007669"/>
    <property type="project" value="UniProtKB-UniRule"/>
</dbReference>
<dbReference type="GO" id="GO:0044211">
    <property type="term" value="P:CTP salvage"/>
    <property type="evidence" value="ECO:0007669"/>
    <property type="project" value="UniProtKB-UniRule"/>
</dbReference>
<dbReference type="GO" id="GO:0044206">
    <property type="term" value="P:UMP salvage"/>
    <property type="evidence" value="ECO:0007669"/>
    <property type="project" value="UniProtKB-UniRule"/>
</dbReference>
<dbReference type="CDD" id="cd02023">
    <property type="entry name" value="UMPK"/>
    <property type="match status" value="1"/>
</dbReference>
<dbReference type="Gene3D" id="3.40.50.300">
    <property type="entry name" value="P-loop containing nucleotide triphosphate hydrolases"/>
    <property type="match status" value="1"/>
</dbReference>
<dbReference type="HAMAP" id="MF_00551">
    <property type="entry name" value="Uridine_kinase"/>
    <property type="match status" value="1"/>
</dbReference>
<dbReference type="InterPro" id="IPR027417">
    <property type="entry name" value="P-loop_NTPase"/>
</dbReference>
<dbReference type="InterPro" id="IPR006083">
    <property type="entry name" value="PRK/URK"/>
</dbReference>
<dbReference type="InterPro" id="IPR026008">
    <property type="entry name" value="Uridine_kinase"/>
</dbReference>
<dbReference type="InterPro" id="IPR000764">
    <property type="entry name" value="Uridine_kinase-like"/>
</dbReference>
<dbReference type="NCBIfam" id="NF004018">
    <property type="entry name" value="PRK05480.1"/>
    <property type="match status" value="1"/>
</dbReference>
<dbReference type="NCBIfam" id="TIGR00235">
    <property type="entry name" value="udk"/>
    <property type="match status" value="1"/>
</dbReference>
<dbReference type="PANTHER" id="PTHR10285">
    <property type="entry name" value="URIDINE KINASE"/>
    <property type="match status" value="1"/>
</dbReference>
<dbReference type="Pfam" id="PF00485">
    <property type="entry name" value="PRK"/>
    <property type="match status" value="1"/>
</dbReference>
<dbReference type="PRINTS" id="PR00988">
    <property type="entry name" value="URIDINKINASE"/>
</dbReference>
<dbReference type="SUPFAM" id="SSF52540">
    <property type="entry name" value="P-loop containing nucleoside triphosphate hydrolases"/>
    <property type="match status" value="1"/>
</dbReference>